<accession>Q9KJU3</accession>
<feature type="chain" id="PRO_0000158127" description="Imidazoleglycerol-phosphate dehydratase">
    <location>
        <begin position="1"/>
        <end position="202"/>
    </location>
</feature>
<feature type="sequence conflict" description="In Ref. 1; AAF80391." evidence="2" ref="1">
    <original>V</original>
    <variation>L</variation>
    <location>
        <position position="3"/>
    </location>
</feature>
<feature type="sequence conflict" description="In Ref. 1; AAF80391." evidence="2" ref="1">
    <original>PFFDH</original>
    <variation>HFSTN</variation>
    <location>
        <begin position="38"/>
        <end position="42"/>
    </location>
</feature>
<feature type="sequence conflict" description="In Ref. 1; AAF80391." evidence="2" ref="1">
    <original>DIEIDA</original>
    <variation>QTSRST</variation>
    <location>
        <begin position="62"/>
        <end position="67"/>
    </location>
</feature>
<feature type="sequence conflict" description="In Ref. 1; AAF80391." evidence="2" ref="1">
    <original>QALLDAIG</original>
    <variation>KHSLRYC</variation>
    <location>
        <begin position="80"/>
        <end position="87"/>
    </location>
</feature>
<feature type="sequence conflict" description="In Ref. 1; AAF80391." evidence="2" ref="1">
    <original>G</original>
    <variation>D</variation>
    <location>
        <position position="164"/>
    </location>
</feature>
<feature type="sequence conflict" description="In Ref. 1." evidence="2" ref="1">
    <original>RQTGIPSTKGAL</original>
    <variation>IPSLRERFTHELFYHL</variation>
    <location>
        <begin position="191"/>
        <end position="202"/>
    </location>
</feature>
<dbReference type="EC" id="4.2.1.19" evidence="1"/>
<dbReference type="EMBL" id="AF160479">
    <property type="protein sequence ID" value="AAF80391.1"/>
    <property type="molecule type" value="Genomic_DNA"/>
</dbReference>
<dbReference type="EMBL" id="BA000036">
    <property type="protein sequence ID" value="BAB99493.1"/>
    <property type="molecule type" value="Genomic_DNA"/>
</dbReference>
<dbReference type="EMBL" id="BX927154">
    <property type="protein sequence ID" value="CAF20436.1"/>
    <property type="molecule type" value="Genomic_DNA"/>
</dbReference>
<dbReference type="RefSeq" id="NP_601299.1">
    <property type="nucleotide sequence ID" value="NC_003450.3"/>
</dbReference>
<dbReference type="RefSeq" id="WP_003861983.1">
    <property type="nucleotide sequence ID" value="NC_006958.1"/>
</dbReference>
<dbReference type="SMR" id="Q9KJU3"/>
<dbReference type="STRING" id="196627.cg2303"/>
<dbReference type="GeneID" id="1020051"/>
<dbReference type="KEGG" id="cgb:cg2303"/>
<dbReference type="KEGG" id="cgl:Cgl2100"/>
<dbReference type="PATRIC" id="fig|196627.13.peg.2037"/>
<dbReference type="eggNOG" id="COG0131">
    <property type="taxonomic scope" value="Bacteria"/>
</dbReference>
<dbReference type="HOGENOM" id="CLU_044308_2_0_11"/>
<dbReference type="OrthoDB" id="9790411at2"/>
<dbReference type="BioCyc" id="CORYNE:G18NG-11692-MONOMER"/>
<dbReference type="UniPathway" id="UPA00031">
    <property type="reaction ID" value="UER00011"/>
</dbReference>
<dbReference type="Proteomes" id="UP000000582">
    <property type="component" value="Chromosome"/>
</dbReference>
<dbReference type="Proteomes" id="UP000001009">
    <property type="component" value="Chromosome"/>
</dbReference>
<dbReference type="GO" id="GO:0005737">
    <property type="term" value="C:cytoplasm"/>
    <property type="evidence" value="ECO:0007669"/>
    <property type="project" value="UniProtKB-SubCell"/>
</dbReference>
<dbReference type="GO" id="GO:0004424">
    <property type="term" value="F:imidazoleglycerol-phosphate dehydratase activity"/>
    <property type="evidence" value="ECO:0007669"/>
    <property type="project" value="UniProtKB-UniRule"/>
</dbReference>
<dbReference type="GO" id="GO:0000105">
    <property type="term" value="P:L-histidine biosynthetic process"/>
    <property type="evidence" value="ECO:0007669"/>
    <property type="project" value="UniProtKB-UniRule"/>
</dbReference>
<dbReference type="CDD" id="cd07914">
    <property type="entry name" value="IGPD"/>
    <property type="match status" value="1"/>
</dbReference>
<dbReference type="FunFam" id="3.30.230.40:FF:000001">
    <property type="entry name" value="Imidazoleglycerol-phosphate dehydratase HisB"/>
    <property type="match status" value="1"/>
</dbReference>
<dbReference type="FunFam" id="3.30.230.40:FF:000003">
    <property type="entry name" value="Imidazoleglycerol-phosphate dehydratase HisB"/>
    <property type="match status" value="1"/>
</dbReference>
<dbReference type="Gene3D" id="3.30.230.40">
    <property type="entry name" value="Imidazole glycerol phosphate dehydratase, domain 1"/>
    <property type="match status" value="2"/>
</dbReference>
<dbReference type="HAMAP" id="MF_00076">
    <property type="entry name" value="HisB"/>
    <property type="match status" value="1"/>
</dbReference>
<dbReference type="InterPro" id="IPR038494">
    <property type="entry name" value="IGPD_sf"/>
</dbReference>
<dbReference type="InterPro" id="IPR000807">
    <property type="entry name" value="ImidazoleglycerolP_deHydtase"/>
</dbReference>
<dbReference type="InterPro" id="IPR020565">
    <property type="entry name" value="ImidazoleglycerP_deHydtase_CS"/>
</dbReference>
<dbReference type="InterPro" id="IPR020568">
    <property type="entry name" value="Ribosomal_Su5_D2-typ_SF"/>
</dbReference>
<dbReference type="NCBIfam" id="NF002110">
    <property type="entry name" value="PRK00951.1-6"/>
    <property type="match status" value="1"/>
</dbReference>
<dbReference type="NCBIfam" id="NF002111">
    <property type="entry name" value="PRK00951.2-1"/>
    <property type="match status" value="1"/>
</dbReference>
<dbReference type="NCBIfam" id="NF002114">
    <property type="entry name" value="PRK00951.2-4"/>
    <property type="match status" value="1"/>
</dbReference>
<dbReference type="PANTHER" id="PTHR23133:SF2">
    <property type="entry name" value="IMIDAZOLEGLYCEROL-PHOSPHATE DEHYDRATASE"/>
    <property type="match status" value="1"/>
</dbReference>
<dbReference type="PANTHER" id="PTHR23133">
    <property type="entry name" value="IMIDAZOLEGLYCEROL-PHOSPHATE DEHYDRATASE HIS7"/>
    <property type="match status" value="1"/>
</dbReference>
<dbReference type="Pfam" id="PF00475">
    <property type="entry name" value="IGPD"/>
    <property type="match status" value="1"/>
</dbReference>
<dbReference type="SUPFAM" id="SSF54211">
    <property type="entry name" value="Ribosomal protein S5 domain 2-like"/>
    <property type="match status" value="2"/>
</dbReference>
<dbReference type="PROSITE" id="PS00954">
    <property type="entry name" value="IGP_DEHYDRATASE_1"/>
    <property type="match status" value="1"/>
</dbReference>
<dbReference type="PROSITE" id="PS00955">
    <property type="entry name" value="IGP_DEHYDRATASE_2"/>
    <property type="match status" value="1"/>
</dbReference>
<protein>
    <recommendedName>
        <fullName evidence="1">Imidazoleglycerol-phosphate dehydratase</fullName>
        <shortName evidence="1">IGPD</shortName>
        <ecNumber evidence="1">4.2.1.19</ecNumber>
    </recommendedName>
</protein>
<evidence type="ECO:0000255" key="1">
    <source>
        <dbReference type="HAMAP-Rule" id="MF_00076"/>
    </source>
</evidence>
<evidence type="ECO:0000305" key="2"/>
<keyword id="KW-0028">Amino-acid biosynthesis</keyword>
<keyword id="KW-0963">Cytoplasm</keyword>
<keyword id="KW-0368">Histidine biosynthesis</keyword>
<keyword id="KW-0456">Lyase</keyword>
<keyword id="KW-1185">Reference proteome</keyword>
<comment type="catalytic activity">
    <reaction evidence="1">
        <text>D-erythro-1-(imidazol-4-yl)glycerol 3-phosphate = 3-(imidazol-4-yl)-2-oxopropyl phosphate + H2O</text>
        <dbReference type="Rhea" id="RHEA:11040"/>
        <dbReference type="ChEBI" id="CHEBI:15377"/>
        <dbReference type="ChEBI" id="CHEBI:57766"/>
        <dbReference type="ChEBI" id="CHEBI:58278"/>
        <dbReference type="EC" id="4.2.1.19"/>
    </reaction>
</comment>
<comment type="pathway">
    <text evidence="1">Amino-acid biosynthesis; L-histidine biosynthesis; L-histidine from 5-phospho-alpha-D-ribose 1-diphosphate: step 6/9.</text>
</comment>
<comment type="subcellular location">
    <subcellularLocation>
        <location evidence="1">Cytoplasm</location>
    </subcellularLocation>
</comment>
<comment type="similarity">
    <text evidence="1">Belongs to the imidazoleglycerol-phosphate dehydratase family.</text>
</comment>
<organism>
    <name type="scientific">Corynebacterium glutamicum (strain ATCC 13032 / DSM 20300 / JCM 1318 / BCRC 11384 / CCUG 27702 / LMG 3730 / NBRC 12168 / NCIMB 10025 / NRRL B-2784 / 534)</name>
    <dbReference type="NCBI Taxonomy" id="196627"/>
    <lineage>
        <taxon>Bacteria</taxon>
        <taxon>Bacillati</taxon>
        <taxon>Actinomycetota</taxon>
        <taxon>Actinomycetes</taxon>
        <taxon>Mycobacteriales</taxon>
        <taxon>Corynebacteriaceae</taxon>
        <taxon>Corynebacterium</taxon>
    </lineage>
</organism>
<name>HIS7_CORGL</name>
<gene>
    <name evidence="1" type="primary">hisB</name>
    <name type="ordered locus">Cgl2100</name>
    <name type="ordered locus">cg2303</name>
</gene>
<reference key="1">
    <citation type="submission" date="1999-06" db="EMBL/GenBank/DDBJ databases">
        <title>Molecular cloning of hisB gene from Corynebacterium glutamicum.</title>
        <authorList>
            <person name="Han M.S."/>
            <person name="Jung S.I."/>
            <person name="Chun J.Y."/>
            <person name="Lee M.-S."/>
        </authorList>
    </citation>
    <scope>NUCLEOTIDE SEQUENCE [GENOMIC DNA]</scope>
    <source>
        <strain>ATCC 13059 / LMG 3658 / NCIB 10332 / AS019 / 613</strain>
    </source>
</reference>
<reference key="2">
    <citation type="journal article" date="2003" name="Appl. Microbiol. Biotechnol.">
        <title>The Corynebacterium glutamicum genome: features and impacts on biotechnological processes.</title>
        <authorList>
            <person name="Ikeda M."/>
            <person name="Nakagawa S."/>
        </authorList>
    </citation>
    <scope>NUCLEOTIDE SEQUENCE [LARGE SCALE GENOMIC DNA]</scope>
    <source>
        <strain>ATCC 13032 / DSM 20300 / JCM 1318 / BCRC 11384 / CCUG 27702 / LMG 3730 / NBRC 12168 / NCIMB 10025 / NRRL B-2784 / 534</strain>
    </source>
</reference>
<reference key="3">
    <citation type="journal article" date="2003" name="J. Biotechnol.">
        <title>The complete Corynebacterium glutamicum ATCC 13032 genome sequence and its impact on the production of L-aspartate-derived amino acids and vitamins.</title>
        <authorList>
            <person name="Kalinowski J."/>
            <person name="Bathe B."/>
            <person name="Bartels D."/>
            <person name="Bischoff N."/>
            <person name="Bott M."/>
            <person name="Burkovski A."/>
            <person name="Dusch N."/>
            <person name="Eggeling L."/>
            <person name="Eikmanns B.J."/>
            <person name="Gaigalat L."/>
            <person name="Goesmann A."/>
            <person name="Hartmann M."/>
            <person name="Huthmacher K."/>
            <person name="Kraemer R."/>
            <person name="Linke B."/>
            <person name="McHardy A.C."/>
            <person name="Meyer F."/>
            <person name="Moeckel B."/>
            <person name="Pfefferle W."/>
            <person name="Puehler A."/>
            <person name="Rey D.A."/>
            <person name="Rueckert C."/>
            <person name="Rupp O."/>
            <person name="Sahm H."/>
            <person name="Wendisch V.F."/>
            <person name="Wiegraebe I."/>
            <person name="Tauch A."/>
        </authorList>
    </citation>
    <scope>NUCLEOTIDE SEQUENCE [LARGE SCALE GENOMIC DNA]</scope>
    <source>
        <strain>ATCC 13032 / DSM 20300 / JCM 1318 / BCRC 11384 / CCUG 27702 / LMG 3730 / NBRC 12168 / NCIMB 10025 / NRRL B-2784 / 534</strain>
    </source>
</reference>
<proteinExistence type="inferred from homology"/>
<sequence length="202" mass="21914">MTVAPRIGTATRTTSESDITVEINLDGTGKVDIDTGLPFFDHMLTAFGVHGSFDLKVHAKGDIEIDAHHTVEDTAIVLGQALLDAIGDKKGIRRFASCQLPMDEALVESVVDISGRPYFVISGEPDHMITSVIGGHYATVINEHFFETLALNSRITLHVICHYGRDPHHITEAEYKAVARALRGAVEMDPRQTGIPSTKGAL</sequence>